<gene>
    <name type="primary">ARPC5L</name>
</gene>
<name>ARP5L_BOVIN</name>
<reference key="1">
    <citation type="journal article" date="2005" name="BMC Genomics">
        <title>Characterization of 954 bovine full-CDS cDNA sequences.</title>
        <authorList>
            <person name="Harhay G.P."/>
            <person name="Sonstegard T.S."/>
            <person name="Keele J.W."/>
            <person name="Heaton M.P."/>
            <person name="Clawson M.L."/>
            <person name="Snelling W.M."/>
            <person name="Wiedmann R.T."/>
            <person name="Van Tassell C.P."/>
            <person name="Smith T.P.L."/>
        </authorList>
    </citation>
    <scope>NUCLEOTIDE SEQUENCE [LARGE SCALE MRNA]</scope>
</reference>
<reference key="2">
    <citation type="submission" date="2006-08" db="EMBL/GenBank/DDBJ databases">
        <authorList>
            <consortium name="NIH - Mammalian Gene Collection (MGC) project"/>
        </authorList>
    </citation>
    <scope>NUCLEOTIDE SEQUENCE [LARGE SCALE MRNA]</scope>
    <source>
        <strain>Hereford</strain>
        <tissue>Fetal cerebellum</tissue>
    </source>
</reference>
<organism>
    <name type="scientific">Bos taurus</name>
    <name type="common">Bovine</name>
    <dbReference type="NCBI Taxonomy" id="9913"/>
    <lineage>
        <taxon>Eukaryota</taxon>
        <taxon>Metazoa</taxon>
        <taxon>Chordata</taxon>
        <taxon>Craniata</taxon>
        <taxon>Vertebrata</taxon>
        <taxon>Euteleostomi</taxon>
        <taxon>Mammalia</taxon>
        <taxon>Eutheria</taxon>
        <taxon>Laurasiatheria</taxon>
        <taxon>Artiodactyla</taxon>
        <taxon>Ruminantia</taxon>
        <taxon>Pecora</taxon>
        <taxon>Bovidae</taxon>
        <taxon>Bovinae</taxon>
        <taxon>Bos</taxon>
    </lineage>
</organism>
<feature type="chain" id="PRO_0000279479" description="Actin-related protein 2/3 complex subunit 5-like protein">
    <location>
        <begin position="1"/>
        <end position="153"/>
    </location>
</feature>
<feature type="modified residue" description="Phosphoserine" evidence="2">
    <location>
        <position position="64"/>
    </location>
</feature>
<accession>Q5E963</accession>
<comment type="function">
    <text evidence="1">May function as component of the Arp2/3 complex which is involved in regulation of actin polymerization and together with an activating nucleation-promoting factor (NPF) mediates the formation of branched actin networks.</text>
</comment>
<comment type="subunit">
    <text>May be a component of the Arp2/3 complex in which it may replace ARPC5.</text>
</comment>
<comment type="subcellular location">
    <subcellularLocation>
        <location evidence="1">Cytoplasm</location>
        <location evidence="1">Cytoskeleton</location>
    </subcellularLocation>
    <subcellularLocation>
        <location evidence="1">Cell projection</location>
    </subcellularLocation>
</comment>
<comment type="similarity">
    <text evidence="3">Belongs to the ARPC5 family.</text>
</comment>
<protein>
    <recommendedName>
        <fullName>Actin-related protein 2/3 complex subunit 5-like protein</fullName>
    </recommendedName>
    <alternativeName>
        <fullName>Arp2/3 complex 16 kDa subunit 2</fullName>
        <shortName>ARC16-2</shortName>
    </alternativeName>
</protein>
<keyword id="KW-0009">Actin-binding</keyword>
<keyword id="KW-0966">Cell projection</keyword>
<keyword id="KW-0963">Cytoplasm</keyword>
<keyword id="KW-0206">Cytoskeleton</keyword>
<keyword id="KW-0597">Phosphoprotein</keyword>
<keyword id="KW-1185">Reference proteome</keyword>
<proteinExistence type="evidence at transcript level"/>
<evidence type="ECO:0000250" key="1"/>
<evidence type="ECO:0000250" key="2">
    <source>
        <dbReference type="UniProtKB" id="Q9BPX5"/>
    </source>
</evidence>
<evidence type="ECO:0000305" key="3"/>
<dbReference type="EMBL" id="BT021057">
    <property type="protein sequence ID" value="AAX09074.1"/>
    <property type="molecule type" value="mRNA"/>
</dbReference>
<dbReference type="EMBL" id="BC120185">
    <property type="protein sequence ID" value="AAI20186.1"/>
    <property type="molecule type" value="mRNA"/>
</dbReference>
<dbReference type="RefSeq" id="NP_001029909.1">
    <property type="nucleotide sequence ID" value="NM_001034737.1"/>
</dbReference>
<dbReference type="SMR" id="Q5E963"/>
<dbReference type="FunCoup" id="Q5E963">
    <property type="interactions" value="3886"/>
</dbReference>
<dbReference type="STRING" id="9913.ENSBTAP00000020318"/>
<dbReference type="PaxDb" id="9913-ENSBTAP00000020318"/>
<dbReference type="PeptideAtlas" id="Q5E963"/>
<dbReference type="Ensembl" id="ENSBTAT00000020318.6">
    <property type="protein sequence ID" value="ENSBTAP00000020318.5"/>
    <property type="gene ID" value="ENSBTAG00000015278.6"/>
</dbReference>
<dbReference type="GeneID" id="613421"/>
<dbReference type="KEGG" id="bta:613421"/>
<dbReference type="CTD" id="81873"/>
<dbReference type="VEuPathDB" id="HostDB:ENSBTAG00000015278"/>
<dbReference type="VGNC" id="VGNC:26166">
    <property type="gene designation" value="ARPC5L"/>
</dbReference>
<dbReference type="eggNOG" id="KOG3380">
    <property type="taxonomic scope" value="Eukaryota"/>
</dbReference>
<dbReference type="GeneTree" id="ENSGT00940000158501"/>
<dbReference type="HOGENOM" id="CLU_101888_1_1_1"/>
<dbReference type="InParanoid" id="Q5E963"/>
<dbReference type="OMA" id="LWHEKAF"/>
<dbReference type="OrthoDB" id="429520at2759"/>
<dbReference type="TreeFam" id="TF319716"/>
<dbReference type="CD-CODE" id="D7FE2080">
    <property type="entry name" value="Nucleolus"/>
</dbReference>
<dbReference type="Proteomes" id="UP000009136">
    <property type="component" value="Chromosome 11"/>
</dbReference>
<dbReference type="Bgee" id="ENSBTAG00000015278">
    <property type="expression patterns" value="Expressed in nasopharynx and 107 other cell types or tissues"/>
</dbReference>
<dbReference type="GO" id="GO:0005885">
    <property type="term" value="C:Arp2/3 protein complex"/>
    <property type="evidence" value="ECO:0000318"/>
    <property type="project" value="GO_Central"/>
</dbReference>
<dbReference type="GO" id="GO:0042995">
    <property type="term" value="C:cell projection"/>
    <property type="evidence" value="ECO:0007669"/>
    <property type="project" value="UniProtKB-SubCell"/>
</dbReference>
<dbReference type="GO" id="GO:0005737">
    <property type="term" value="C:cytoplasm"/>
    <property type="evidence" value="ECO:0000318"/>
    <property type="project" value="GO_Central"/>
</dbReference>
<dbReference type="GO" id="GO:0098978">
    <property type="term" value="C:glutamatergic synapse"/>
    <property type="evidence" value="ECO:0007669"/>
    <property type="project" value="Ensembl"/>
</dbReference>
<dbReference type="GO" id="GO:0051015">
    <property type="term" value="F:actin filament binding"/>
    <property type="evidence" value="ECO:0000318"/>
    <property type="project" value="GO_Central"/>
</dbReference>
<dbReference type="GO" id="GO:0034314">
    <property type="term" value="P:Arp2/3 complex-mediated actin nucleation"/>
    <property type="evidence" value="ECO:0000318"/>
    <property type="project" value="GO_Central"/>
</dbReference>
<dbReference type="GO" id="GO:0016477">
    <property type="term" value="P:cell migration"/>
    <property type="evidence" value="ECO:0000318"/>
    <property type="project" value="GO_Central"/>
</dbReference>
<dbReference type="GO" id="GO:0030833">
    <property type="term" value="P:regulation of actin filament polymerization"/>
    <property type="evidence" value="ECO:0007669"/>
    <property type="project" value="InterPro"/>
</dbReference>
<dbReference type="FunFam" id="1.25.40.190:FF:000001">
    <property type="entry name" value="Actin-related protein 2/3 complex subunit 5"/>
    <property type="match status" value="1"/>
</dbReference>
<dbReference type="Gene3D" id="1.25.40.190">
    <property type="entry name" value="Actin-related protein 2/3 complex subunit 5"/>
    <property type="match status" value="1"/>
</dbReference>
<dbReference type="InterPro" id="IPR006789">
    <property type="entry name" value="ARPC5"/>
</dbReference>
<dbReference type="InterPro" id="IPR036743">
    <property type="entry name" value="ARPC5_sf"/>
</dbReference>
<dbReference type="PANTHER" id="PTHR12644">
    <property type="entry name" value="ARP2/3 COMPLEX 16 KD SUBUNIT P16-ARC"/>
    <property type="match status" value="1"/>
</dbReference>
<dbReference type="Pfam" id="PF04699">
    <property type="entry name" value="P16-Arc"/>
    <property type="match status" value="1"/>
</dbReference>
<dbReference type="PIRSF" id="PIRSF039096">
    <property type="entry name" value="p16-ARC"/>
    <property type="match status" value="1"/>
</dbReference>
<dbReference type="SUPFAM" id="SSF69103">
    <property type="entry name" value="Arp2/3 complex 16 kDa subunit ARPC5"/>
    <property type="match status" value="1"/>
</dbReference>
<sequence length="153" mass="16941">MARNTLSSRFRRVDIDEFDENKFVDEQEEAAAAAGEPGPDPSEVDGLLRQGDMLRAFHAALRNSPVNTKNQAVKERAQGVVLKVLTNFKSSEIEQAVQSLDRNGIDLLMKYIYKGFEKPTENSSAVLLQWHEKALAVGGLGSIIRVLTARKTV</sequence>